<dbReference type="EMBL" id="CP000260">
    <property type="protein sequence ID" value="ABF33478.1"/>
    <property type="molecule type" value="Genomic_DNA"/>
</dbReference>
<dbReference type="SMR" id="Q1JI45"/>
<dbReference type="KEGG" id="sph:MGAS10270_Spy0413"/>
<dbReference type="HOGENOM" id="CLU_190949_0_2_9"/>
<dbReference type="Proteomes" id="UP000002436">
    <property type="component" value="Chromosome"/>
</dbReference>
<dbReference type="GO" id="GO:0005737">
    <property type="term" value="C:cytoplasm"/>
    <property type="evidence" value="ECO:0007669"/>
    <property type="project" value="UniProtKB-ARBA"/>
</dbReference>
<dbReference type="GO" id="GO:1990904">
    <property type="term" value="C:ribonucleoprotein complex"/>
    <property type="evidence" value="ECO:0007669"/>
    <property type="project" value="UniProtKB-KW"/>
</dbReference>
<dbReference type="GO" id="GO:0005840">
    <property type="term" value="C:ribosome"/>
    <property type="evidence" value="ECO:0007669"/>
    <property type="project" value="UniProtKB-KW"/>
</dbReference>
<dbReference type="GO" id="GO:0003735">
    <property type="term" value="F:structural constituent of ribosome"/>
    <property type="evidence" value="ECO:0007669"/>
    <property type="project" value="InterPro"/>
</dbReference>
<dbReference type="GO" id="GO:0006412">
    <property type="term" value="P:translation"/>
    <property type="evidence" value="ECO:0007669"/>
    <property type="project" value="UniProtKB-UniRule"/>
</dbReference>
<dbReference type="Gene3D" id="2.20.28.120">
    <property type="entry name" value="Ribosomal protein L33"/>
    <property type="match status" value="1"/>
</dbReference>
<dbReference type="HAMAP" id="MF_00294">
    <property type="entry name" value="Ribosomal_bL33"/>
    <property type="match status" value="1"/>
</dbReference>
<dbReference type="InterPro" id="IPR001705">
    <property type="entry name" value="Ribosomal_bL33"/>
</dbReference>
<dbReference type="InterPro" id="IPR038584">
    <property type="entry name" value="Ribosomal_bL33_sf"/>
</dbReference>
<dbReference type="InterPro" id="IPR011332">
    <property type="entry name" value="Ribosomal_zn-bd"/>
</dbReference>
<dbReference type="NCBIfam" id="NF001764">
    <property type="entry name" value="PRK00504.1"/>
    <property type="match status" value="1"/>
</dbReference>
<dbReference type="NCBIfam" id="NF001860">
    <property type="entry name" value="PRK00595.1"/>
    <property type="match status" value="1"/>
</dbReference>
<dbReference type="NCBIfam" id="TIGR01023">
    <property type="entry name" value="rpmG_bact"/>
    <property type="match status" value="1"/>
</dbReference>
<dbReference type="PANTHER" id="PTHR43168">
    <property type="entry name" value="50S RIBOSOMAL PROTEIN L33, CHLOROPLASTIC"/>
    <property type="match status" value="1"/>
</dbReference>
<dbReference type="PANTHER" id="PTHR43168:SF6">
    <property type="entry name" value="LARGE RIBOSOMAL SUBUNIT PROTEIN BL33A"/>
    <property type="match status" value="1"/>
</dbReference>
<dbReference type="Pfam" id="PF00471">
    <property type="entry name" value="Ribosomal_L33"/>
    <property type="match status" value="1"/>
</dbReference>
<dbReference type="SUPFAM" id="SSF57829">
    <property type="entry name" value="Zn-binding ribosomal proteins"/>
    <property type="match status" value="1"/>
</dbReference>
<accession>Q1JI45</accession>
<reference key="1">
    <citation type="journal article" date="2006" name="Proc. Natl. Acad. Sci. U.S.A.">
        <title>Molecular genetic anatomy of inter- and intraserotype variation in the human bacterial pathogen group A Streptococcus.</title>
        <authorList>
            <person name="Beres S.B."/>
            <person name="Richter E.W."/>
            <person name="Nagiec M.J."/>
            <person name="Sumby P."/>
            <person name="Porcella S.F."/>
            <person name="DeLeo F.R."/>
            <person name="Musser J.M."/>
        </authorList>
    </citation>
    <scope>NUCLEOTIDE SEQUENCE [LARGE SCALE GENOMIC DNA]</scope>
    <source>
        <strain>MGAS10270</strain>
    </source>
</reference>
<proteinExistence type="inferred from homology"/>
<feature type="chain" id="PRO_0000356724" description="Large ribosomal subunit protein bL33A">
    <location>
        <begin position="1"/>
        <end position="48"/>
    </location>
</feature>
<gene>
    <name evidence="1" type="primary">rpmG1</name>
    <name type="ordered locus">MGAS10270_Spy0413</name>
</gene>
<sequence>MRVKINLECSECGSNNYLTSKNKSSHPEKIKVPKYCPKERKVTLHVET</sequence>
<organism>
    <name type="scientific">Streptococcus pyogenes serotype M2 (strain MGAS10270)</name>
    <dbReference type="NCBI Taxonomy" id="370552"/>
    <lineage>
        <taxon>Bacteria</taxon>
        <taxon>Bacillati</taxon>
        <taxon>Bacillota</taxon>
        <taxon>Bacilli</taxon>
        <taxon>Lactobacillales</taxon>
        <taxon>Streptococcaceae</taxon>
        <taxon>Streptococcus</taxon>
    </lineage>
</organism>
<keyword id="KW-0687">Ribonucleoprotein</keyword>
<keyword id="KW-0689">Ribosomal protein</keyword>
<name>RL331_STRPD</name>
<comment type="similarity">
    <text evidence="1">Belongs to the bacterial ribosomal protein bL33 family.</text>
</comment>
<evidence type="ECO:0000255" key="1">
    <source>
        <dbReference type="HAMAP-Rule" id="MF_00294"/>
    </source>
</evidence>
<protein>
    <recommendedName>
        <fullName evidence="1">Large ribosomal subunit protein bL33A</fullName>
    </recommendedName>
    <alternativeName>
        <fullName evidence="1">50S ribosomal protein L33 1</fullName>
    </alternativeName>
</protein>